<name>SLMA_SALPK</name>
<sequence length="198" mass="22865">MAEKQTAKRNRREEILQSLALMLESSDGSQRITTAKLAASVGVSEAALYRHFPSKTRMFDSLIEFIEDSLITRINLILKDEKDTSTRLRLIVLLILGFGERNPGLTRILTGHALMFEQDRLQGRINQLFERIEAQLRQVLREKRMREGEGYTTDENLLASQLLAFCEGMLSRFVRSEFKYRPTDDFDARWPLIAAQLQ</sequence>
<gene>
    <name evidence="1" type="primary">slmA</name>
    <name type="ordered locus">SSPA3347</name>
</gene>
<keyword id="KW-0131">Cell cycle</keyword>
<keyword id="KW-0132">Cell division</keyword>
<keyword id="KW-0175">Coiled coil</keyword>
<keyword id="KW-0963">Cytoplasm</keyword>
<keyword id="KW-0238">DNA-binding</keyword>
<dbReference type="EMBL" id="FM200053">
    <property type="protein sequence ID" value="CAR61613.1"/>
    <property type="molecule type" value="Genomic_DNA"/>
</dbReference>
<dbReference type="RefSeq" id="WP_000818595.1">
    <property type="nucleotide sequence ID" value="NC_011147.1"/>
</dbReference>
<dbReference type="SMR" id="B5BI15"/>
<dbReference type="KEGG" id="sek:SSPA3347"/>
<dbReference type="HOGENOM" id="CLU_069356_5_0_6"/>
<dbReference type="Proteomes" id="UP000001869">
    <property type="component" value="Chromosome"/>
</dbReference>
<dbReference type="GO" id="GO:0043590">
    <property type="term" value="C:bacterial nucleoid"/>
    <property type="evidence" value="ECO:0007669"/>
    <property type="project" value="UniProtKB-UniRule"/>
</dbReference>
<dbReference type="GO" id="GO:0005737">
    <property type="term" value="C:cytoplasm"/>
    <property type="evidence" value="ECO:0007669"/>
    <property type="project" value="UniProtKB-UniRule"/>
</dbReference>
<dbReference type="GO" id="GO:0003700">
    <property type="term" value="F:DNA-binding transcription factor activity"/>
    <property type="evidence" value="ECO:0007669"/>
    <property type="project" value="TreeGrafter"/>
</dbReference>
<dbReference type="GO" id="GO:0000976">
    <property type="term" value="F:transcription cis-regulatory region binding"/>
    <property type="evidence" value="ECO:0007669"/>
    <property type="project" value="TreeGrafter"/>
</dbReference>
<dbReference type="GO" id="GO:0051301">
    <property type="term" value="P:cell division"/>
    <property type="evidence" value="ECO:0007669"/>
    <property type="project" value="UniProtKB-KW"/>
</dbReference>
<dbReference type="GO" id="GO:0010974">
    <property type="term" value="P:negative regulation of division septum assembly"/>
    <property type="evidence" value="ECO:0007669"/>
    <property type="project" value="InterPro"/>
</dbReference>
<dbReference type="FunFam" id="1.10.357.10:FF:000002">
    <property type="entry name" value="Nucleoid occlusion factor SlmA"/>
    <property type="match status" value="1"/>
</dbReference>
<dbReference type="Gene3D" id="1.10.357.10">
    <property type="entry name" value="Tetracycline Repressor, domain 2"/>
    <property type="match status" value="1"/>
</dbReference>
<dbReference type="HAMAP" id="MF_01839">
    <property type="entry name" value="NO_factor_SlmA"/>
    <property type="match status" value="1"/>
</dbReference>
<dbReference type="InterPro" id="IPR023772">
    <property type="entry name" value="DNA-bd_HTH_TetR-type_CS"/>
</dbReference>
<dbReference type="InterPro" id="IPR009057">
    <property type="entry name" value="Homeodomain-like_sf"/>
</dbReference>
<dbReference type="InterPro" id="IPR050109">
    <property type="entry name" value="HTH-type_TetR-like_transc_reg"/>
</dbReference>
<dbReference type="InterPro" id="IPR001647">
    <property type="entry name" value="HTH_TetR"/>
</dbReference>
<dbReference type="InterPro" id="IPR023769">
    <property type="entry name" value="NO_SlmA"/>
</dbReference>
<dbReference type="InterPro" id="IPR054580">
    <property type="entry name" value="SlmA-like_C"/>
</dbReference>
<dbReference type="InterPro" id="IPR036271">
    <property type="entry name" value="Tet_transcr_reg_TetR-rel_C_sf"/>
</dbReference>
<dbReference type="NCBIfam" id="NF007015">
    <property type="entry name" value="PRK09480.1"/>
    <property type="match status" value="1"/>
</dbReference>
<dbReference type="PANTHER" id="PTHR30055">
    <property type="entry name" value="HTH-TYPE TRANSCRIPTIONAL REGULATOR RUTR"/>
    <property type="match status" value="1"/>
</dbReference>
<dbReference type="PANTHER" id="PTHR30055:SF183">
    <property type="entry name" value="NUCLEOID OCCLUSION FACTOR SLMA"/>
    <property type="match status" value="1"/>
</dbReference>
<dbReference type="Pfam" id="PF22276">
    <property type="entry name" value="SlmA-like_C"/>
    <property type="match status" value="1"/>
</dbReference>
<dbReference type="Pfam" id="PF00440">
    <property type="entry name" value="TetR_N"/>
    <property type="match status" value="1"/>
</dbReference>
<dbReference type="SUPFAM" id="SSF46689">
    <property type="entry name" value="Homeodomain-like"/>
    <property type="match status" value="1"/>
</dbReference>
<dbReference type="SUPFAM" id="SSF48498">
    <property type="entry name" value="Tetracyclin repressor-like, C-terminal domain"/>
    <property type="match status" value="1"/>
</dbReference>
<dbReference type="PROSITE" id="PS01081">
    <property type="entry name" value="HTH_TETR_1"/>
    <property type="match status" value="1"/>
</dbReference>
<dbReference type="PROSITE" id="PS50977">
    <property type="entry name" value="HTH_TETR_2"/>
    <property type="match status" value="1"/>
</dbReference>
<reference key="1">
    <citation type="journal article" date="2009" name="BMC Genomics">
        <title>Pseudogene accumulation in the evolutionary histories of Salmonella enterica serovars Paratyphi A and Typhi.</title>
        <authorList>
            <person name="Holt K.E."/>
            <person name="Thomson N.R."/>
            <person name="Wain J."/>
            <person name="Langridge G.C."/>
            <person name="Hasan R."/>
            <person name="Bhutta Z.A."/>
            <person name="Quail M.A."/>
            <person name="Norbertczak H."/>
            <person name="Walker D."/>
            <person name="Simmonds M."/>
            <person name="White B."/>
            <person name="Bason N."/>
            <person name="Mungall K."/>
            <person name="Dougan G."/>
            <person name="Parkhill J."/>
        </authorList>
    </citation>
    <scope>NUCLEOTIDE SEQUENCE [LARGE SCALE GENOMIC DNA]</scope>
    <source>
        <strain>AKU_12601</strain>
    </source>
</reference>
<proteinExistence type="inferred from homology"/>
<feature type="chain" id="PRO_1000188400" description="Nucleoid occlusion factor SlmA">
    <location>
        <begin position="1"/>
        <end position="198"/>
    </location>
</feature>
<feature type="domain" description="HTH tetR-type" evidence="1">
    <location>
        <begin position="10"/>
        <end position="70"/>
    </location>
</feature>
<feature type="DNA-binding region" description="H-T-H motif" evidence="1">
    <location>
        <begin position="33"/>
        <end position="52"/>
    </location>
</feature>
<feature type="coiled-coil region" evidence="1">
    <location>
        <begin position="117"/>
        <end position="144"/>
    </location>
</feature>
<evidence type="ECO:0000255" key="1">
    <source>
        <dbReference type="HAMAP-Rule" id="MF_01839"/>
    </source>
</evidence>
<comment type="function">
    <text evidence="1">Required for nucleoid occlusion (NO) phenomenon, which prevents Z-ring formation and cell division over the nucleoid. Acts as a DNA-associated cell division inhibitor that binds simultaneously chromosomal DNA and FtsZ, and disrupts the assembly of FtsZ polymers. SlmA-DNA-binding sequences (SBS) are dispersed on non-Ter regions of the chromosome, preventing FtsZ polymerization at these regions.</text>
</comment>
<comment type="subunit">
    <text evidence="1">Homodimer. Interacts with FtsZ.</text>
</comment>
<comment type="subcellular location">
    <subcellularLocation>
        <location evidence="1">Cytoplasm</location>
        <location evidence="1">Nucleoid</location>
    </subcellularLocation>
</comment>
<comment type="similarity">
    <text evidence="1">Belongs to the nucleoid occlusion factor SlmA family.</text>
</comment>
<organism>
    <name type="scientific">Salmonella paratyphi A (strain AKU_12601)</name>
    <dbReference type="NCBI Taxonomy" id="554290"/>
    <lineage>
        <taxon>Bacteria</taxon>
        <taxon>Pseudomonadati</taxon>
        <taxon>Pseudomonadota</taxon>
        <taxon>Gammaproteobacteria</taxon>
        <taxon>Enterobacterales</taxon>
        <taxon>Enterobacteriaceae</taxon>
        <taxon>Salmonella</taxon>
    </lineage>
</organism>
<accession>B5BI15</accession>
<protein>
    <recommendedName>
        <fullName evidence="1">Nucleoid occlusion factor SlmA</fullName>
    </recommendedName>
</protein>